<protein>
    <recommendedName>
        <fullName evidence="1">Phosphomethylpyrimidine synthase</fullName>
        <ecNumber evidence="1">4.1.99.17</ecNumber>
    </recommendedName>
    <alternativeName>
        <fullName evidence="1">Hydroxymethylpyrimidine phosphate synthase</fullName>
        <shortName evidence="1">HMP-P synthase</shortName>
        <shortName evidence="1">HMP-phosphate synthase</shortName>
        <shortName evidence="1">HMPP synthase</shortName>
    </alternativeName>
    <alternativeName>
        <fullName evidence="1">Thiamine biosynthesis protein ThiC</fullName>
    </alternativeName>
</protein>
<feature type="chain" id="PRO_1000057590" description="Phosphomethylpyrimidine synthase">
    <location>
        <begin position="1"/>
        <end position="437"/>
    </location>
</feature>
<feature type="binding site" evidence="1">
    <location>
        <position position="69"/>
    </location>
    <ligand>
        <name>substrate</name>
    </ligand>
</feature>
<feature type="binding site" evidence="1">
    <location>
        <position position="98"/>
    </location>
    <ligand>
        <name>substrate</name>
    </ligand>
</feature>
<feature type="binding site" evidence="1">
    <location>
        <position position="127"/>
    </location>
    <ligand>
        <name>substrate</name>
    </ligand>
</feature>
<feature type="binding site" evidence="1">
    <location>
        <position position="163"/>
    </location>
    <ligand>
        <name>substrate</name>
    </ligand>
</feature>
<feature type="binding site" evidence="1">
    <location>
        <begin position="185"/>
        <end position="187"/>
    </location>
    <ligand>
        <name>substrate</name>
    </ligand>
</feature>
<feature type="binding site" evidence="1">
    <location>
        <begin position="226"/>
        <end position="229"/>
    </location>
    <ligand>
        <name>substrate</name>
    </ligand>
</feature>
<feature type="binding site" evidence="1">
    <location>
        <position position="265"/>
    </location>
    <ligand>
        <name>substrate</name>
    </ligand>
</feature>
<feature type="binding site" evidence="1">
    <location>
        <position position="269"/>
    </location>
    <ligand>
        <name>Zn(2+)</name>
        <dbReference type="ChEBI" id="CHEBI:29105"/>
    </ligand>
</feature>
<feature type="binding site" evidence="1">
    <location>
        <position position="292"/>
    </location>
    <ligand>
        <name>substrate</name>
    </ligand>
</feature>
<feature type="binding site" evidence="1">
    <location>
        <position position="333"/>
    </location>
    <ligand>
        <name>Zn(2+)</name>
        <dbReference type="ChEBI" id="CHEBI:29105"/>
    </ligand>
</feature>
<feature type="binding site" evidence="1">
    <location>
        <position position="409"/>
    </location>
    <ligand>
        <name>[4Fe-4S] cluster</name>
        <dbReference type="ChEBI" id="CHEBI:49883"/>
        <note>4Fe-4S-S-AdoMet</note>
    </ligand>
</feature>
<feature type="binding site" evidence="1">
    <location>
        <position position="412"/>
    </location>
    <ligand>
        <name>[4Fe-4S] cluster</name>
        <dbReference type="ChEBI" id="CHEBI:49883"/>
        <note>4Fe-4S-S-AdoMet</note>
    </ligand>
</feature>
<feature type="binding site" evidence="1">
    <location>
        <position position="416"/>
    </location>
    <ligand>
        <name>[4Fe-4S] cluster</name>
        <dbReference type="ChEBI" id="CHEBI:49883"/>
        <note>4Fe-4S-S-AdoMet</note>
    </ligand>
</feature>
<sequence length="437" mass="48872">MNYTTQMDAAKKGIVTKEMEIVAKKENMNVKDLMELVSKGKVAIPANKNHKSLDPEGIGQGLRTKINVNLGISKDCYNIDMELEKVQKAIDMKAEAIMDLSCFGKTEEFRKRLIDMSPAIIGTVPIYDAVGFYDKELKDITSEEFLKVAEKHAENGADFLTIHVGMNRKTAATFKKNPRRMNIVSRGGSLLYAWMELNNKENPFYEGFNKLLDICEKYDVTLSLGDACRPGCIEDSTDASQIEELIALGELTKRAWERNVQVIIEGPGHMTLDEIETNMKIEKKLCHGAPFYVLGPIVTDIAPGYDHITSAIGGAIAATHGADFLCYVTPAEHLRLPNLDDMKEGIIATKIAAHAADLAKGVKGARDWDNAMAKARRDLDWERMFELSIDEEKARRYREESKAKSKDSCTMCGKMCAVRNMNRVTEGKDLNMLRDDD</sequence>
<dbReference type="EC" id="4.1.99.17" evidence="1"/>
<dbReference type="EMBL" id="CP000728">
    <property type="protein sequence ID" value="ABS41768.1"/>
    <property type="molecule type" value="Genomic_DNA"/>
</dbReference>
<dbReference type="RefSeq" id="WP_012100699.1">
    <property type="nucleotide sequence ID" value="NC_009699.1"/>
</dbReference>
<dbReference type="SMR" id="A7GHD2"/>
<dbReference type="KEGG" id="cbf:CLI_2967"/>
<dbReference type="HOGENOM" id="CLU_013181_2_2_9"/>
<dbReference type="UniPathway" id="UPA00060"/>
<dbReference type="Proteomes" id="UP000002410">
    <property type="component" value="Chromosome"/>
</dbReference>
<dbReference type="GO" id="GO:0005829">
    <property type="term" value="C:cytosol"/>
    <property type="evidence" value="ECO:0007669"/>
    <property type="project" value="TreeGrafter"/>
</dbReference>
<dbReference type="GO" id="GO:0051539">
    <property type="term" value="F:4 iron, 4 sulfur cluster binding"/>
    <property type="evidence" value="ECO:0007669"/>
    <property type="project" value="UniProtKB-KW"/>
</dbReference>
<dbReference type="GO" id="GO:0016830">
    <property type="term" value="F:carbon-carbon lyase activity"/>
    <property type="evidence" value="ECO:0007669"/>
    <property type="project" value="InterPro"/>
</dbReference>
<dbReference type="GO" id="GO:0008270">
    <property type="term" value="F:zinc ion binding"/>
    <property type="evidence" value="ECO:0007669"/>
    <property type="project" value="UniProtKB-UniRule"/>
</dbReference>
<dbReference type="GO" id="GO:0009228">
    <property type="term" value="P:thiamine biosynthetic process"/>
    <property type="evidence" value="ECO:0007669"/>
    <property type="project" value="UniProtKB-KW"/>
</dbReference>
<dbReference type="GO" id="GO:0009229">
    <property type="term" value="P:thiamine diphosphate biosynthetic process"/>
    <property type="evidence" value="ECO:0007669"/>
    <property type="project" value="UniProtKB-UniRule"/>
</dbReference>
<dbReference type="FunFam" id="3.20.20.540:FF:000001">
    <property type="entry name" value="Phosphomethylpyrimidine synthase"/>
    <property type="match status" value="1"/>
</dbReference>
<dbReference type="Gene3D" id="6.10.250.620">
    <property type="match status" value="1"/>
</dbReference>
<dbReference type="Gene3D" id="3.20.20.540">
    <property type="entry name" value="Radical SAM ThiC family, central domain"/>
    <property type="match status" value="1"/>
</dbReference>
<dbReference type="HAMAP" id="MF_00089">
    <property type="entry name" value="ThiC"/>
    <property type="match status" value="1"/>
</dbReference>
<dbReference type="InterPro" id="IPR037509">
    <property type="entry name" value="ThiC"/>
</dbReference>
<dbReference type="InterPro" id="IPR038521">
    <property type="entry name" value="ThiC/Bza_core_dom"/>
</dbReference>
<dbReference type="InterPro" id="IPR002817">
    <property type="entry name" value="ThiC/BzaA/B"/>
</dbReference>
<dbReference type="NCBIfam" id="NF009895">
    <property type="entry name" value="PRK13352.1"/>
    <property type="match status" value="1"/>
</dbReference>
<dbReference type="NCBIfam" id="TIGR00190">
    <property type="entry name" value="thiC"/>
    <property type="match status" value="1"/>
</dbReference>
<dbReference type="PANTHER" id="PTHR30557:SF1">
    <property type="entry name" value="PHOSPHOMETHYLPYRIMIDINE SYNTHASE, CHLOROPLASTIC"/>
    <property type="match status" value="1"/>
</dbReference>
<dbReference type="PANTHER" id="PTHR30557">
    <property type="entry name" value="THIAMINE BIOSYNTHESIS PROTEIN THIC"/>
    <property type="match status" value="1"/>
</dbReference>
<dbReference type="Pfam" id="PF01964">
    <property type="entry name" value="ThiC_Rad_SAM"/>
    <property type="match status" value="1"/>
</dbReference>
<dbReference type="SFLD" id="SFLDF00407">
    <property type="entry name" value="phosphomethylpyrimidine_syntha"/>
    <property type="match status" value="1"/>
</dbReference>
<dbReference type="SFLD" id="SFLDG01114">
    <property type="entry name" value="phosphomethylpyrimidine_syntha"/>
    <property type="match status" value="1"/>
</dbReference>
<dbReference type="SFLD" id="SFLDS00113">
    <property type="entry name" value="Radical_SAM_Phosphomethylpyrim"/>
    <property type="match status" value="1"/>
</dbReference>
<organism>
    <name type="scientific">Clostridium botulinum (strain Langeland / NCTC 10281 / Type F)</name>
    <dbReference type="NCBI Taxonomy" id="441772"/>
    <lineage>
        <taxon>Bacteria</taxon>
        <taxon>Bacillati</taxon>
        <taxon>Bacillota</taxon>
        <taxon>Clostridia</taxon>
        <taxon>Eubacteriales</taxon>
        <taxon>Clostridiaceae</taxon>
        <taxon>Clostridium</taxon>
    </lineage>
</organism>
<accession>A7GHD2</accession>
<reference key="1">
    <citation type="submission" date="2007-06" db="EMBL/GenBank/DDBJ databases">
        <authorList>
            <person name="Brinkac L.M."/>
            <person name="Daugherty S."/>
            <person name="Dodson R.J."/>
            <person name="Madupu R."/>
            <person name="Brown J.L."/>
            <person name="Bruce D."/>
            <person name="Detter C."/>
            <person name="Munk C."/>
            <person name="Smith L.A."/>
            <person name="Smith T.J."/>
            <person name="White O."/>
            <person name="Brettin T.S."/>
        </authorList>
    </citation>
    <scope>NUCLEOTIDE SEQUENCE [LARGE SCALE GENOMIC DNA]</scope>
    <source>
        <strain>Langeland / NCTC 10281 / Type F</strain>
    </source>
</reference>
<comment type="function">
    <text evidence="1">Catalyzes the synthesis of the hydroxymethylpyrimidine phosphate (HMP-P) moiety of thiamine from aminoimidazole ribotide (AIR) in a radical S-adenosyl-L-methionine (SAM)-dependent reaction.</text>
</comment>
<comment type="catalytic activity">
    <reaction evidence="1">
        <text>5-amino-1-(5-phospho-beta-D-ribosyl)imidazole + S-adenosyl-L-methionine = 4-amino-2-methyl-5-(phosphooxymethyl)pyrimidine + CO + 5'-deoxyadenosine + formate + L-methionine + 3 H(+)</text>
        <dbReference type="Rhea" id="RHEA:24840"/>
        <dbReference type="ChEBI" id="CHEBI:15378"/>
        <dbReference type="ChEBI" id="CHEBI:15740"/>
        <dbReference type="ChEBI" id="CHEBI:17245"/>
        <dbReference type="ChEBI" id="CHEBI:17319"/>
        <dbReference type="ChEBI" id="CHEBI:57844"/>
        <dbReference type="ChEBI" id="CHEBI:58354"/>
        <dbReference type="ChEBI" id="CHEBI:59789"/>
        <dbReference type="ChEBI" id="CHEBI:137981"/>
        <dbReference type="EC" id="4.1.99.17"/>
    </reaction>
</comment>
<comment type="cofactor">
    <cofactor evidence="1">
        <name>[4Fe-4S] cluster</name>
        <dbReference type="ChEBI" id="CHEBI:49883"/>
    </cofactor>
    <text evidence="1">Binds 1 [4Fe-4S] cluster per subunit. The cluster is coordinated with 3 cysteines and an exchangeable S-adenosyl-L-methionine.</text>
</comment>
<comment type="pathway">
    <text evidence="1">Cofactor biosynthesis; thiamine diphosphate biosynthesis.</text>
</comment>
<comment type="similarity">
    <text evidence="1">Belongs to the ThiC family.</text>
</comment>
<keyword id="KW-0004">4Fe-4S</keyword>
<keyword id="KW-0408">Iron</keyword>
<keyword id="KW-0411">Iron-sulfur</keyword>
<keyword id="KW-0456">Lyase</keyword>
<keyword id="KW-0479">Metal-binding</keyword>
<keyword id="KW-0949">S-adenosyl-L-methionine</keyword>
<keyword id="KW-0784">Thiamine biosynthesis</keyword>
<keyword id="KW-0862">Zinc</keyword>
<proteinExistence type="inferred from homology"/>
<gene>
    <name evidence="1" type="primary">thiC</name>
    <name type="ordered locus">CLI_2967</name>
</gene>
<evidence type="ECO:0000255" key="1">
    <source>
        <dbReference type="HAMAP-Rule" id="MF_00089"/>
    </source>
</evidence>
<name>THIC_CLOBL</name>